<protein>
    <recommendedName>
        <fullName evidence="1">Large ribosomal subunit protein bL36</fullName>
    </recommendedName>
    <alternativeName>
        <fullName evidence="2">50S ribosomal protein L36</fullName>
    </alternativeName>
</protein>
<sequence length="37" mass="4345">MKVRPSVKKICEKCKVIKRHGKVMVICENPKHKQRQG</sequence>
<accession>Q250K8</accession>
<feature type="chain" id="PRO_0000302196" description="Large ribosomal subunit protein bL36">
    <location>
        <begin position="1"/>
        <end position="37"/>
    </location>
</feature>
<keyword id="KW-1185">Reference proteome</keyword>
<keyword id="KW-0687">Ribonucleoprotein</keyword>
<keyword id="KW-0689">Ribosomal protein</keyword>
<name>RL36_DESHY</name>
<reference key="1">
    <citation type="journal article" date="2006" name="J. Bacteriol.">
        <title>Complete genome sequence of the dehalorespiring bacterium Desulfitobacterium hafniense Y51 and comparison with Dehalococcoides ethenogenes 195.</title>
        <authorList>
            <person name="Nonaka H."/>
            <person name="Keresztes G."/>
            <person name="Shinoda Y."/>
            <person name="Ikenaga Y."/>
            <person name="Abe M."/>
            <person name="Naito K."/>
            <person name="Inatomi K."/>
            <person name="Furukawa K."/>
            <person name="Inui M."/>
            <person name="Yukawa H."/>
        </authorList>
    </citation>
    <scope>NUCLEOTIDE SEQUENCE [LARGE SCALE GENOMIC DNA]</scope>
    <source>
        <strain>Y51</strain>
    </source>
</reference>
<proteinExistence type="inferred from homology"/>
<evidence type="ECO:0000255" key="1">
    <source>
        <dbReference type="HAMAP-Rule" id="MF_00251"/>
    </source>
</evidence>
<evidence type="ECO:0000305" key="2"/>
<comment type="similarity">
    <text evidence="1">Belongs to the bacterial ribosomal protein bL36 family.</text>
</comment>
<gene>
    <name evidence="1" type="primary">rpmJ</name>
    <name type="ordered locus">DSY0495</name>
</gene>
<dbReference type="EMBL" id="AP008230">
    <property type="protein sequence ID" value="BAE82284.1"/>
    <property type="molecule type" value="Genomic_DNA"/>
</dbReference>
<dbReference type="RefSeq" id="WP_005810119.1">
    <property type="nucleotide sequence ID" value="NC_007907.1"/>
</dbReference>
<dbReference type="SMR" id="Q250K8"/>
<dbReference type="STRING" id="138119.DSY0495"/>
<dbReference type="KEGG" id="dsy:DSY0495"/>
<dbReference type="eggNOG" id="COG0257">
    <property type="taxonomic scope" value="Bacteria"/>
</dbReference>
<dbReference type="HOGENOM" id="CLU_135723_6_2_9"/>
<dbReference type="Proteomes" id="UP000001946">
    <property type="component" value="Chromosome"/>
</dbReference>
<dbReference type="GO" id="GO:0005737">
    <property type="term" value="C:cytoplasm"/>
    <property type="evidence" value="ECO:0007669"/>
    <property type="project" value="UniProtKB-ARBA"/>
</dbReference>
<dbReference type="GO" id="GO:1990904">
    <property type="term" value="C:ribonucleoprotein complex"/>
    <property type="evidence" value="ECO:0007669"/>
    <property type="project" value="UniProtKB-KW"/>
</dbReference>
<dbReference type="GO" id="GO:0005840">
    <property type="term" value="C:ribosome"/>
    <property type="evidence" value="ECO:0007669"/>
    <property type="project" value="UniProtKB-KW"/>
</dbReference>
<dbReference type="GO" id="GO:0003735">
    <property type="term" value="F:structural constituent of ribosome"/>
    <property type="evidence" value="ECO:0007669"/>
    <property type="project" value="InterPro"/>
</dbReference>
<dbReference type="GO" id="GO:0006412">
    <property type="term" value="P:translation"/>
    <property type="evidence" value="ECO:0007669"/>
    <property type="project" value="UniProtKB-UniRule"/>
</dbReference>
<dbReference type="HAMAP" id="MF_00251">
    <property type="entry name" value="Ribosomal_bL36"/>
    <property type="match status" value="1"/>
</dbReference>
<dbReference type="InterPro" id="IPR000473">
    <property type="entry name" value="Ribosomal_bL36"/>
</dbReference>
<dbReference type="InterPro" id="IPR035977">
    <property type="entry name" value="Ribosomal_bL36_sp"/>
</dbReference>
<dbReference type="NCBIfam" id="TIGR01022">
    <property type="entry name" value="rpmJ_bact"/>
    <property type="match status" value="1"/>
</dbReference>
<dbReference type="PANTHER" id="PTHR42888">
    <property type="entry name" value="50S RIBOSOMAL PROTEIN L36, CHLOROPLASTIC"/>
    <property type="match status" value="1"/>
</dbReference>
<dbReference type="PANTHER" id="PTHR42888:SF1">
    <property type="entry name" value="LARGE RIBOSOMAL SUBUNIT PROTEIN BL36C"/>
    <property type="match status" value="1"/>
</dbReference>
<dbReference type="Pfam" id="PF00444">
    <property type="entry name" value="Ribosomal_L36"/>
    <property type="match status" value="1"/>
</dbReference>
<dbReference type="SUPFAM" id="SSF57840">
    <property type="entry name" value="Ribosomal protein L36"/>
    <property type="match status" value="1"/>
</dbReference>
<dbReference type="PROSITE" id="PS00828">
    <property type="entry name" value="RIBOSOMAL_L36"/>
    <property type="match status" value="1"/>
</dbReference>
<organism>
    <name type="scientific">Desulfitobacterium hafniense (strain Y51)</name>
    <dbReference type="NCBI Taxonomy" id="138119"/>
    <lineage>
        <taxon>Bacteria</taxon>
        <taxon>Bacillati</taxon>
        <taxon>Bacillota</taxon>
        <taxon>Clostridia</taxon>
        <taxon>Eubacteriales</taxon>
        <taxon>Desulfitobacteriaceae</taxon>
        <taxon>Desulfitobacterium</taxon>
    </lineage>
</organism>